<name>PSF1_SCHPO</name>
<gene>
    <name type="primary">psf1</name>
    <name type="ORF">SPBP23A10.09</name>
</gene>
<dbReference type="EMBL" id="CU329671">
    <property type="protein sequence ID" value="CAB66437.1"/>
    <property type="molecule type" value="Genomic_DNA"/>
</dbReference>
<dbReference type="PIR" id="T50396">
    <property type="entry name" value="T50396"/>
</dbReference>
<dbReference type="RefSeq" id="NP_595821.1">
    <property type="nucleotide sequence ID" value="NM_001021725.2"/>
</dbReference>
<dbReference type="SMR" id="Q9P7X6"/>
<dbReference type="BioGRID" id="277836">
    <property type="interactions" value="9"/>
</dbReference>
<dbReference type="FunCoup" id="Q9P7X6">
    <property type="interactions" value="235"/>
</dbReference>
<dbReference type="IntAct" id="Q9P7X6">
    <property type="interactions" value="1"/>
</dbReference>
<dbReference type="MINT" id="Q9P7X6"/>
<dbReference type="STRING" id="284812.Q9P7X6"/>
<dbReference type="PaxDb" id="4896-SPBP23A10.09.1"/>
<dbReference type="EnsemblFungi" id="SPBP23A10.09.1">
    <property type="protein sequence ID" value="SPBP23A10.09.1:pep"/>
    <property type="gene ID" value="SPBP23A10.09"/>
</dbReference>
<dbReference type="GeneID" id="2541324"/>
<dbReference type="KEGG" id="spo:2541324"/>
<dbReference type="PomBase" id="SPBP23A10.09">
    <property type="gene designation" value="psf1"/>
</dbReference>
<dbReference type="VEuPathDB" id="FungiDB:SPBP23A10.09"/>
<dbReference type="eggNOG" id="KOG3303">
    <property type="taxonomic scope" value="Eukaryota"/>
</dbReference>
<dbReference type="HOGENOM" id="CLU_079191_0_0_1"/>
<dbReference type="InParanoid" id="Q9P7X6"/>
<dbReference type="OMA" id="CLMAYHN"/>
<dbReference type="PhylomeDB" id="Q9P7X6"/>
<dbReference type="Reactome" id="R-SPO-176974">
    <property type="pathway name" value="Unwinding of DNA"/>
</dbReference>
<dbReference type="PRO" id="PR:Q9P7X6"/>
<dbReference type="Proteomes" id="UP000002485">
    <property type="component" value="Chromosome II"/>
</dbReference>
<dbReference type="GO" id="GO:0005829">
    <property type="term" value="C:cytosol"/>
    <property type="evidence" value="ECO:0007005"/>
    <property type="project" value="PomBase"/>
</dbReference>
<dbReference type="GO" id="GO:0000811">
    <property type="term" value="C:GINS complex"/>
    <property type="evidence" value="ECO:0000318"/>
    <property type="project" value="GO_Central"/>
</dbReference>
<dbReference type="GO" id="GO:0043596">
    <property type="term" value="C:nuclear replication fork"/>
    <property type="evidence" value="ECO:0000305"/>
    <property type="project" value="PomBase"/>
</dbReference>
<dbReference type="GO" id="GO:0005634">
    <property type="term" value="C:nucleus"/>
    <property type="evidence" value="ECO:0007005"/>
    <property type="project" value="PomBase"/>
</dbReference>
<dbReference type="GO" id="GO:1902983">
    <property type="term" value="P:DNA strand elongation involved in mitotic DNA replication"/>
    <property type="evidence" value="ECO:0000315"/>
    <property type="project" value="PomBase"/>
</dbReference>
<dbReference type="GO" id="GO:1902975">
    <property type="term" value="P:mitotic DNA replication initiation"/>
    <property type="evidence" value="ECO:0000315"/>
    <property type="project" value="PomBase"/>
</dbReference>
<dbReference type="CDD" id="cd11710">
    <property type="entry name" value="GINS_A_psf1"/>
    <property type="match status" value="1"/>
</dbReference>
<dbReference type="CDD" id="cd21696">
    <property type="entry name" value="GINS_B_Psf1"/>
    <property type="match status" value="1"/>
</dbReference>
<dbReference type="Gene3D" id="1.20.58.1030">
    <property type="match status" value="1"/>
</dbReference>
<dbReference type="InterPro" id="IPR021151">
    <property type="entry name" value="GINS_A"/>
</dbReference>
<dbReference type="InterPro" id="IPR036224">
    <property type="entry name" value="GINS_bundle-like_dom_sf"/>
</dbReference>
<dbReference type="InterPro" id="IPR005339">
    <property type="entry name" value="GINS_Psf1"/>
</dbReference>
<dbReference type="InterPro" id="IPR056783">
    <property type="entry name" value="PSF1_C"/>
</dbReference>
<dbReference type="PANTHER" id="PTHR12914:SF2">
    <property type="entry name" value="DNA REPLICATION COMPLEX GINS PROTEIN PSF1"/>
    <property type="match status" value="1"/>
</dbReference>
<dbReference type="PANTHER" id="PTHR12914">
    <property type="entry name" value="PARTNER OF SLD5"/>
    <property type="match status" value="1"/>
</dbReference>
<dbReference type="Pfam" id="PF24997">
    <property type="entry name" value="PSF1_C"/>
    <property type="match status" value="1"/>
</dbReference>
<dbReference type="Pfam" id="PF05916">
    <property type="entry name" value="Sld5"/>
    <property type="match status" value="1"/>
</dbReference>
<dbReference type="SUPFAM" id="SSF158573">
    <property type="entry name" value="GINS helical bundle-like"/>
    <property type="match status" value="1"/>
</dbReference>
<evidence type="ECO:0000250" key="1"/>
<evidence type="ECO:0000269" key="2">
    <source>
    </source>
</evidence>
<evidence type="ECO:0000305" key="3"/>
<sequence length="202" mass="23075">MENGLGNRSNKLIRDSKRTQYLDYLPPYQADTVNDVVNEIRAADRESLGILQNVTHEASQPFQPQDHPSEAAALLMFHSSSIYNKRCLMAYHNLRLQRLRQYCWSGGKRMESCLDTSLSTYERDYLTRYSELLAAYKGAWSELDLTGSLVPPKNLFIDVRVLKDVGDIETEYGTINLTKNSQLHVRATDVERLIAQGFLAKL</sequence>
<organism>
    <name type="scientific">Schizosaccharomyces pombe (strain 972 / ATCC 24843)</name>
    <name type="common">Fission yeast</name>
    <dbReference type="NCBI Taxonomy" id="284812"/>
    <lineage>
        <taxon>Eukaryota</taxon>
        <taxon>Fungi</taxon>
        <taxon>Dikarya</taxon>
        <taxon>Ascomycota</taxon>
        <taxon>Taphrinomycotina</taxon>
        <taxon>Schizosaccharomycetes</taxon>
        <taxon>Schizosaccharomycetales</taxon>
        <taxon>Schizosaccharomycetaceae</taxon>
        <taxon>Schizosaccharomyces</taxon>
    </lineage>
</organism>
<proteinExistence type="inferred from homology"/>
<comment type="function">
    <text evidence="1">The GINS complex plays an essential role in the initiation of DNA replication.</text>
</comment>
<comment type="subunit">
    <text evidence="1">Component of the GINS complex which is a heterotetramer of sld5, psf1, psf2 and psf3.</text>
</comment>
<comment type="subcellular location">
    <subcellularLocation>
        <location evidence="2">Cytoplasm</location>
    </subcellularLocation>
    <subcellularLocation>
        <location evidence="2">Nucleus</location>
    </subcellularLocation>
</comment>
<comment type="similarity">
    <text evidence="3">Belongs to the GINS1/PSF1 family.</text>
</comment>
<feature type="chain" id="PRO_0000219039" description="DNA replication complex GINS protein psf1">
    <location>
        <begin position="1"/>
        <end position="202"/>
    </location>
</feature>
<keyword id="KW-0963">Cytoplasm</keyword>
<keyword id="KW-0235">DNA replication</keyword>
<keyword id="KW-0539">Nucleus</keyword>
<keyword id="KW-1185">Reference proteome</keyword>
<accession>Q9P7X6</accession>
<reference key="1">
    <citation type="journal article" date="2002" name="Nature">
        <title>The genome sequence of Schizosaccharomyces pombe.</title>
        <authorList>
            <person name="Wood V."/>
            <person name="Gwilliam R."/>
            <person name="Rajandream M.A."/>
            <person name="Lyne M.H."/>
            <person name="Lyne R."/>
            <person name="Stewart A."/>
            <person name="Sgouros J.G."/>
            <person name="Peat N."/>
            <person name="Hayles J."/>
            <person name="Baker S.G."/>
            <person name="Basham D."/>
            <person name="Bowman S."/>
            <person name="Brooks K."/>
            <person name="Brown D."/>
            <person name="Brown S."/>
            <person name="Chillingworth T."/>
            <person name="Churcher C.M."/>
            <person name="Collins M."/>
            <person name="Connor R."/>
            <person name="Cronin A."/>
            <person name="Davis P."/>
            <person name="Feltwell T."/>
            <person name="Fraser A."/>
            <person name="Gentles S."/>
            <person name="Goble A."/>
            <person name="Hamlin N."/>
            <person name="Harris D.E."/>
            <person name="Hidalgo J."/>
            <person name="Hodgson G."/>
            <person name="Holroyd S."/>
            <person name="Hornsby T."/>
            <person name="Howarth S."/>
            <person name="Huckle E.J."/>
            <person name="Hunt S."/>
            <person name="Jagels K."/>
            <person name="James K.D."/>
            <person name="Jones L."/>
            <person name="Jones M."/>
            <person name="Leather S."/>
            <person name="McDonald S."/>
            <person name="McLean J."/>
            <person name="Mooney P."/>
            <person name="Moule S."/>
            <person name="Mungall K.L."/>
            <person name="Murphy L.D."/>
            <person name="Niblett D."/>
            <person name="Odell C."/>
            <person name="Oliver K."/>
            <person name="O'Neil S."/>
            <person name="Pearson D."/>
            <person name="Quail M.A."/>
            <person name="Rabbinowitsch E."/>
            <person name="Rutherford K.M."/>
            <person name="Rutter S."/>
            <person name="Saunders D."/>
            <person name="Seeger K."/>
            <person name="Sharp S."/>
            <person name="Skelton J."/>
            <person name="Simmonds M.N."/>
            <person name="Squares R."/>
            <person name="Squares S."/>
            <person name="Stevens K."/>
            <person name="Taylor K."/>
            <person name="Taylor R.G."/>
            <person name="Tivey A."/>
            <person name="Walsh S.V."/>
            <person name="Warren T."/>
            <person name="Whitehead S."/>
            <person name="Woodward J.R."/>
            <person name="Volckaert G."/>
            <person name="Aert R."/>
            <person name="Robben J."/>
            <person name="Grymonprez B."/>
            <person name="Weltjens I."/>
            <person name="Vanstreels E."/>
            <person name="Rieger M."/>
            <person name="Schaefer M."/>
            <person name="Mueller-Auer S."/>
            <person name="Gabel C."/>
            <person name="Fuchs M."/>
            <person name="Duesterhoeft A."/>
            <person name="Fritzc C."/>
            <person name="Holzer E."/>
            <person name="Moestl D."/>
            <person name="Hilbert H."/>
            <person name="Borzym K."/>
            <person name="Langer I."/>
            <person name="Beck A."/>
            <person name="Lehrach H."/>
            <person name="Reinhardt R."/>
            <person name="Pohl T.M."/>
            <person name="Eger P."/>
            <person name="Zimmermann W."/>
            <person name="Wedler H."/>
            <person name="Wambutt R."/>
            <person name="Purnelle B."/>
            <person name="Goffeau A."/>
            <person name="Cadieu E."/>
            <person name="Dreano S."/>
            <person name="Gloux S."/>
            <person name="Lelaure V."/>
            <person name="Mottier S."/>
            <person name="Galibert F."/>
            <person name="Aves S.J."/>
            <person name="Xiang Z."/>
            <person name="Hunt C."/>
            <person name="Moore K."/>
            <person name="Hurst S.M."/>
            <person name="Lucas M."/>
            <person name="Rochet M."/>
            <person name="Gaillardin C."/>
            <person name="Tallada V.A."/>
            <person name="Garzon A."/>
            <person name="Thode G."/>
            <person name="Daga R.R."/>
            <person name="Cruzado L."/>
            <person name="Jimenez J."/>
            <person name="Sanchez M."/>
            <person name="del Rey F."/>
            <person name="Benito J."/>
            <person name="Dominguez A."/>
            <person name="Revuelta J.L."/>
            <person name="Moreno S."/>
            <person name="Armstrong J."/>
            <person name="Forsburg S.L."/>
            <person name="Cerutti L."/>
            <person name="Lowe T."/>
            <person name="McCombie W.R."/>
            <person name="Paulsen I."/>
            <person name="Potashkin J."/>
            <person name="Shpakovski G.V."/>
            <person name="Ussery D."/>
            <person name="Barrell B.G."/>
            <person name="Nurse P."/>
        </authorList>
    </citation>
    <scope>NUCLEOTIDE SEQUENCE [LARGE SCALE GENOMIC DNA]</scope>
    <source>
        <strain>972 / ATCC 24843</strain>
    </source>
</reference>
<reference key="2">
    <citation type="journal article" date="2006" name="Nat. Biotechnol.">
        <title>ORFeome cloning and global analysis of protein localization in the fission yeast Schizosaccharomyces pombe.</title>
        <authorList>
            <person name="Matsuyama A."/>
            <person name="Arai R."/>
            <person name="Yashiroda Y."/>
            <person name="Shirai A."/>
            <person name="Kamata A."/>
            <person name="Sekido S."/>
            <person name="Kobayashi Y."/>
            <person name="Hashimoto A."/>
            <person name="Hamamoto M."/>
            <person name="Hiraoka Y."/>
            <person name="Horinouchi S."/>
            <person name="Yoshida M."/>
        </authorList>
    </citation>
    <scope>SUBCELLULAR LOCATION [LARGE SCALE ANALYSIS]</scope>
</reference>
<protein>
    <recommendedName>
        <fullName>DNA replication complex GINS protein psf1</fullName>
    </recommendedName>
</protein>